<evidence type="ECO:0000250" key="1"/>
<evidence type="ECO:0000250" key="2">
    <source>
        <dbReference type="UniProtKB" id="P0CG47"/>
    </source>
</evidence>
<evidence type="ECO:0000250" key="3">
    <source>
        <dbReference type="UniProtKB" id="P0CG51"/>
    </source>
</evidence>
<evidence type="ECO:0000255" key="4">
    <source>
        <dbReference type="PROSITE-ProRule" id="PRU00214"/>
    </source>
</evidence>
<evidence type="ECO:0000303" key="5">
    <source>
    </source>
</evidence>
<evidence type="ECO:0000305" key="6"/>
<gene>
    <name type="primary">Ubb</name>
</gene>
<accession>P0CG49</accession>
<accession>P02248</accession>
<accession>P02249</accession>
<accession>P02250</accession>
<accession>P62991</accession>
<accession>Q29120</accession>
<accession>Q62317</accession>
<accession>Q64223</accession>
<accession>Q8VCH1</accession>
<accession>Q91887</accession>
<accession>Q91888</accession>
<accession>Q9CXY4</accession>
<accession>Q9CZM0</accession>
<accession>Q9D1R5</accession>
<accession>Q9D8D9</accession>
<accession>Q9ET23</accession>
<accession>Q9ET24</accession>
<accession>Q9Z0H9</accession>
<sequence>MQIFVKTLTGKTITLEVEPSDTIENVKAKIQDKEGIPPDQQRLIFAGKQLEDGRTLSDYNIQKESTLHLVLRLRGGMQIFVKTLTGKTITLEVEPSDTIENVKAKIQDKEGIPPDQQRLIFAGKQLEDGRTLSDYNIQKESTLHLVLRLRGGMQIFVKTLTGKTITLEVEPSDTIENVKAKIQDKEGIPPDQQRLIFAGKQLEDGRTLSDYNIQKESTLHLVLRLRGGMQIFVKTLTGKTITLEVEPSDTIENVKAKIQDKEGIPPDQQRLIFAGKQLEDGRTLSDYNIQKESTLHLVLRLRGGY</sequence>
<reference key="1">
    <citation type="journal article" date="1990" name="Nucleic Acids Res.">
        <title>Murine polyubiquitin mRNA sequence.</title>
        <authorList>
            <person name="Finch J.S."/>
            <person name="Bonham K."/>
            <person name="Krieg P."/>
            <person name="Bowden G.T."/>
        </authorList>
    </citation>
    <scope>NUCLEOTIDE SEQUENCE [MRNA]</scope>
    <source>
        <strain>C57BL/6J</strain>
    </source>
</reference>
<reference key="2">
    <citation type="journal article" date="2005" name="Science">
        <title>The transcriptional landscape of the mammalian genome.</title>
        <authorList>
            <person name="Carninci P."/>
            <person name="Kasukawa T."/>
            <person name="Katayama S."/>
            <person name="Gough J."/>
            <person name="Frith M.C."/>
            <person name="Maeda N."/>
            <person name="Oyama R."/>
            <person name="Ravasi T."/>
            <person name="Lenhard B."/>
            <person name="Wells C."/>
            <person name="Kodzius R."/>
            <person name="Shimokawa K."/>
            <person name="Bajic V.B."/>
            <person name="Brenner S.E."/>
            <person name="Batalov S."/>
            <person name="Forrest A.R."/>
            <person name="Zavolan M."/>
            <person name="Davis M.J."/>
            <person name="Wilming L.G."/>
            <person name="Aidinis V."/>
            <person name="Allen J.E."/>
            <person name="Ambesi-Impiombato A."/>
            <person name="Apweiler R."/>
            <person name="Aturaliya R.N."/>
            <person name="Bailey T.L."/>
            <person name="Bansal M."/>
            <person name="Baxter L."/>
            <person name="Beisel K.W."/>
            <person name="Bersano T."/>
            <person name="Bono H."/>
            <person name="Chalk A.M."/>
            <person name="Chiu K.P."/>
            <person name="Choudhary V."/>
            <person name="Christoffels A."/>
            <person name="Clutterbuck D.R."/>
            <person name="Crowe M.L."/>
            <person name="Dalla E."/>
            <person name="Dalrymple B.P."/>
            <person name="de Bono B."/>
            <person name="Della Gatta G."/>
            <person name="di Bernardo D."/>
            <person name="Down T."/>
            <person name="Engstrom P."/>
            <person name="Fagiolini M."/>
            <person name="Faulkner G."/>
            <person name="Fletcher C.F."/>
            <person name="Fukushima T."/>
            <person name="Furuno M."/>
            <person name="Futaki S."/>
            <person name="Gariboldi M."/>
            <person name="Georgii-Hemming P."/>
            <person name="Gingeras T.R."/>
            <person name="Gojobori T."/>
            <person name="Green R.E."/>
            <person name="Gustincich S."/>
            <person name="Harbers M."/>
            <person name="Hayashi Y."/>
            <person name="Hensch T.K."/>
            <person name="Hirokawa N."/>
            <person name="Hill D."/>
            <person name="Huminiecki L."/>
            <person name="Iacono M."/>
            <person name="Ikeo K."/>
            <person name="Iwama A."/>
            <person name="Ishikawa T."/>
            <person name="Jakt M."/>
            <person name="Kanapin A."/>
            <person name="Katoh M."/>
            <person name="Kawasawa Y."/>
            <person name="Kelso J."/>
            <person name="Kitamura H."/>
            <person name="Kitano H."/>
            <person name="Kollias G."/>
            <person name="Krishnan S.P."/>
            <person name="Kruger A."/>
            <person name="Kummerfeld S.K."/>
            <person name="Kurochkin I.V."/>
            <person name="Lareau L.F."/>
            <person name="Lazarevic D."/>
            <person name="Lipovich L."/>
            <person name="Liu J."/>
            <person name="Liuni S."/>
            <person name="McWilliam S."/>
            <person name="Madan Babu M."/>
            <person name="Madera M."/>
            <person name="Marchionni L."/>
            <person name="Matsuda H."/>
            <person name="Matsuzawa S."/>
            <person name="Miki H."/>
            <person name="Mignone F."/>
            <person name="Miyake S."/>
            <person name="Morris K."/>
            <person name="Mottagui-Tabar S."/>
            <person name="Mulder N."/>
            <person name="Nakano N."/>
            <person name="Nakauchi H."/>
            <person name="Ng P."/>
            <person name="Nilsson R."/>
            <person name="Nishiguchi S."/>
            <person name="Nishikawa S."/>
            <person name="Nori F."/>
            <person name="Ohara O."/>
            <person name="Okazaki Y."/>
            <person name="Orlando V."/>
            <person name="Pang K.C."/>
            <person name="Pavan W.J."/>
            <person name="Pavesi G."/>
            <person name="Pesole G."/>
            <person name="Petrovsky N."/>
            <person name="Piazza S."/>
            <person name="Reed J."/>
            <person name="Reid J.F."/>
            <person name="Ring B.Z."/>
            <person name="Ringwald M."/>
            <person name="Rost B."/>
            <person name="Ruan Y."/>
            <person name="Salzberg S.L."/>
            <person name="Sandelin A."/>
            <person name="Schneider C."/>
            <person name="Schoenbach C."/>
            <person name="Sekiguchi K."/>
            <person name="Semple C.A."/>
            <person name="Seno S."/>
            <person name="Sessa L."/>
            <person name="Sheng Y."/>
            <person name="Shibata Y."/>
            <person name="Shimada H."/>
            <person name="Shimada K."/>
            <person name="Silva D."/>
            <person name="Sinclair B."/>
            <person name="Sperling S."/>
            <person name="Stupka E."/>
            <person name="Sugiura K."/>
            <person name="Sultana R."/>
            <person name="Takenaka Y."/>
            <person name="Taki K."/>
            <person name="Tammoja K."/>
            <person name="Tan S.L."/>
            <person name="Tang S."/>
            <person name="Taylor M.S."/>
            <person name="Tegner J."/>
            <person name="Teichmann S.A."/>
            <person name="Ueda H.R."/>
            <person name="van Nimwegen E."/>
            <person name="Verardo R."/>
            <person name="Wei C.L."/>
            <person name="Yagi K."/>
            <person name="Yamanishi H."/>
            <person name="Zabarovsky E."/>
            <person name="Zhu S."/>
            <person name="Zimmer A."/>
            <person name="Hide W."/>
            <person name="Bult C."/>
            <person name="Grimmond S.M."/>
            <person name="Teasdale R.D."/>
            <person name="Liu E.T."/>
            <person name="Brusic V."/>
            <person name="Quackenbush J."/>
            <person name="Wahlestedt C."/>
            <person name="Mattick J.S."/>
            <person name="Hume D.A."/>
            <person name="Kai C."/>
            <person name="Sasaki D."/>
            <person name="Tomaru Y."/>
            <person name="Fukuda S."/>
            <person name="Kanamori-Katayama M."/>
            <person name="Suzuki M."/>
            <person name="Aoki J."/>
            <person name="Arakawa T."/>
            <person name="Iida J."/>
            <person name="Imamura K."/>
            <person name="Itoh M."/>
            <person name="Kato T."/>
            <person name="Kawaji H."/>
            <person name="Kawagashira N."/>
            <person name="Kawashima T."/>
            <person name="Kojima M."/>
            <person name="Kondo S."/>
            <person name="Konno H."/>
            <person name="Nakano K."/>
            <person name="Ninomiya N."/>
            <person name="Nishio T."/>
            <person name="Okada M."/>
            <person name="Plessy C."/>
            <person name="Shibata K."/>
            <person name="Shiraki T."/>
            <person name="Suzuki S."/>
            <person name="Tagami M."/>
            <person name="Waki K."/>
            <person name="Watahiki A."/>
            <person name="Okamura-Oho Y."/>
            <person name="Suzuki H."/>
            <person name="Kawai J."/>
            <person name="Hayashizaki Y."/>
        </authorList>
    </citation>
    <scope>NUCLEOTIDE SEQUENCE [LARGE SCALE MRNA]</scope>
    <source>
        <strain>C57BL/6J</strain>
        <tissue>Head</tissue>
        <tissue>Kidney</tissue>
    </source>
</reference>
<reference key="3">
    <citation type="journal article" date="2004" name="Genome Res.">
        <title>The status, quality, and expansion of the NIH full-length cDNA project: the Mammalian Gene Collection (MGC).</title>
        <authorList>
            <consortium name="The MGC Project Team"/>
        </authorList>
    </citation>
    <scope>NUCLEOTIDE SEQUENCE [LARGE SCALE MRNA]</scope>
    <source>
        <strain>C57BL/6J</strain>
        <strain>FVB/N</strain>
        <tissue>Liver</tissue>
        <tissue>Mammary tumor</tissue>
    </source>
</reference>
<reference key="4">
    <citation type="journal article" date="2009" name="Biochem. Soc. Trans.">
        <title>The emerging complexity of protein ubiquitination.</title>
        <authorList>
            <person name="Komander D."/>
        </authorList>
    </citation>
    <scope>REVIEW</scope>
    <scope>FUNCTION</scope>
</reference>
<protein>
    <recommendedName>
        <fullName>Polyubiquitin-B</fullName>
    </recommendedName>
    <component>
        <recommendedName>
            <fullName>Ubiquitin</fullName>
        </recommendedName>
    </component>
</protein>
<comment type="function">
    <molecule>Ubiquitin</molecule>
    <text evidence="5">Exists either covalently attached to another protein, or free (unanchored). When covalently bound, it is conjugated to target proteins via an isopeptide bond either as a monomer (monoubiquitin), a polymer linked via different Lys residues of the ubiquitin (polyubiquitin chains) or a linear polymer linked via the initiator Met of the ubiquitin (linear polyubiquitin chains). Polyubiquitin chains, when attached to a target protein, have different functions depending on the Lys residue of the ubiquitin that is linked: Lys-6-linked may be involved in DNA repair; Lys-11-linked is involved in ERAD (endoplasmic reticulum-associated degradation) and in cell-cycle regulation; Lys-29-linked is involved in proteotoxic stress response and cell cycle; Lys-33-linked is involved in kinase modification; Lys-48-linked is involved in protein degradation via the proteasome; Lys-63-linked is involved in endocytosis, DNA-damage responses as well as in signaling processes leading to activation of the transcription factor NF-kappa-B. Linear polymer chains formed via attachment by the initiator Met lead to cell signaling. Ubiquitin is usually conjugated to Lys residues of target proteins, however, in rare cases, conjugation to Cys or Ser residues has been observed. When polyubiquitin is free (unanchored-polyubiquitin), it also has distinct roles, such as in activation of protein kinases, and in signaling.</text>
</comment>
<comment type="subunit">
    <text evidence="2">Interacts with SKP1-KMD2A and SKP1-KMD2B complexes.</text>
</comment>
<comment type="subcellular location">
    <molecule>Ubiquitin</molecule>
    <subcellularLocation>
        <location evidence="1">Cytoplasm</location>
    </subcellularLocation>
    <subcellularLocation>
        <location evidence="1">Nucleus</location>
    </subcellularLocation>
    <subcellularLocation>
        <location evidence="2">Mitochondrion outer membrane</location>
        <topology evidence="2">Peripheral membrane protein</topology>
    </subcellularLocation>
</comment>
<comment type="PTM">
    <molecule>Ubiquitin</molecule>
    <text evidence="2">Phosphorylated at Ser-65 by PINK1 during mitophagy. Phosphorylated ubiquitin specifically binds and activates parkin (PRKN), triggering mitophagy. Phosphorylation does not affect E1-mediated E2 charging of ubiquitin but affects discharging of E2 enzymes to form polyubiquitin chains. It also affects deubiquitination by deubiquitinase enzymes such as USP30.</text>
</comment>
<comment type="PTM">
    <molecule>Ubiquitin</molecule>
    <text evidence="2">Mono-ADP-ribosylated at the C-terminus by PARP9, a component of the PPAR9-DTX3L complex. ADP-ribosylation requires processing by E1 and E2 enzymes and prevents ubiquitin conjugation to substrates such as histones.</text>
</comment>
<comment type="miscellaneous">
    <text>Ubiquitin is encoded by 4 different genes. Uba52 and Rps27a genes code for a single copy of ubiquitin fused to the ribosomal proteins eL40 and eS31, respectively. UBB and UBC genes code for a polyubiquitin precursor with exact head to tail repeats, the number of repeats differ between species and strains.</text>
</comment>
<comment type="miscellaneous">
    <text>For the sake of clarity sequence features are annotated only for the first chain, and are not repeated for each of the following chains.</text>
</comment>
<comment type="similarity">
    <text evidence="6">Belongs to the ubiquitin family.</text>
</comment>
<dbReference type="EMBL" id="X51703">
    <property type="protein sequence ID" value="CAA35999.1"/>
    <property type="molecule type" value="mRNA"/>
</dbReference>
<dbReference type="EMBL" id="AK012443">
    <property type="protein sequence ID" value="BAB28242.1"/>
    <property type="molecule type" value="mRNA"/>
</dbReference>
<dbReference type="EMBL" id="AK003190">
    <property type="protein sequence ID" value="BAB22630.1"/>
    <property type="molecule type" value="mRNA"/>
</dbReference>
<dbReference type="EMBL" id="AK013873">
    <property type="protein sequence ID" value="BAB29028.1"/>
    <property type="molecule type" value="mRNA"/>
</dbReference>
<dbReference type="EMBL" id="BC019850">
    <property type="protein sequence ID" value="AAH19850.1"/>
    <property type="molecule type" value="mRNA"/>
</dbReference>
<dbReference type="CCDS" id="CCDS24826.1"/>
<dbReference type="PIR" id="S12583">
    <property type="entry name" value="S12583"/>
</dbReference>
<dbReference type="RefSeq" id="NP_001300913.1">
    <property type="nucleotide sequence ID" value="NM_001313984.2"/>
</dbReference>
<dbReference type="RefSeq" id="NP_035794.1">
    <property type="nucleotide sequence ID" value="NM_011664.5"/>
</dbReference>
<dbReference type="SMR" id="P0CG49"/>
<dbReference type="BioGRID" id="204402">
    <property type="interactions" value="21"/>
</dbReference>
<dbReference type="FunCoup" id="P0CG49">
    <property type="interactions" value="584"/>
</dbReference>
<dbReference type="IntAct" id="P0CG49">
    <property type="interactions" value="3"/>
</dbReference>
<dbReference type="MINT" id="P0CG49"/>
<dbReference type="STRING" id="10090.ENSMUSP00000019649"/>
<dbReference type="GlyGen" id="P0CG49">
    <property type="glycosylation" value="1 site, 1 O-linked glycan (1 site)"/>
</dbReference>
<dbReference type="iPTMnet" id="P0CG49"/>
<dbReference type="PhosphoSitePlus" id="P0CG49"/>
<dbReference type="SwissPalm" id="P0CG49"/>
<dbReference type="REPRODUCTION-2DPAGE" id="P62991"/>
<dbReference type="jPOST" id="P0CG49"/>
<dbReference type="PaxDb" id="10090-ENSMUSP00000019649"/>
<dbReference type="Pumba" id="P0CG49"/>
<dbReference type="Antibodypedia" id="4579">
    <property type="antibodies" value="556 antibodies from 41 providers"/>
</dbReference>
<dbReference type="DNASU" id="22187"/>
<dbReference type="Ensembl" id="ENSMUST00000019649.4">
    <property type="protein sequence ID" value="ENSMUSP00000019649.4"/>
    <property type="gene ID" value="ENSMUSG00000019505.8"/>
</dbReference>
<dbReference type="GeneID" id="22187"/>
<dbReference type="KEGG" id="mmu:22187"/>
<dbReference type="UCSC" id="uc007jjg.1">
    <property type="organism name" value="mouse"/>
</dbReference>
<dbReference type="AGR" id="MGI:98888"/>
<dbReference type="CTD" id="7314"/>
<dbReference type="MGI" id="MGI:98888">
    <property type="gene designation" value="Ubb"/>
</dbReference>
<dbReference type="VEuPathDB" id="HostDB:ENSMUSG00000019505"/>
<dbReference type="eggNOG" id="KOG0001">
    <property type="taxonomic scope" value="Eukaryota"/>
</dbReference>
<dbReference type="GeneTree" id="ENSGT00940000162439"/>
<dbReference type="HOGENOM" id="CLU_010412_7_0_1"/>
<dbReference type="InParanoid" id="P0CG49"/>
<dbReference type="OMA" id="VHENTRR"/>
<dbReference type="OrthoDB" id="428577at2759"/>
<dbReference type="PhylomeDB" id="P0CG49"/>
<dbReference type="TreeFam" id="TF300820"/>
<dbReference type="Reactome" id="R-MMU-110312">
    <property type="pathway name" value="Translesion synthesis by REV1"/>
</dbReference>
<dbReference type="Reactome" id="R-MMU-110314">
    <property type="pathway name" value="Recognition of DNA damage by PCNA-containing replication complex"/>
</dbReference>
<dbReference type="Reactome" id="R-MMU-110320">
    <property type="pathway name" value="Translesion Synthesis by POLH"/>
</dbReference>
<dbReference type="Reactome" id="R-MMU-1169091">
    <property type="pathway name" value="Activation of NF-kappaB in B cells"/>
</dbReference>
<dbReference type="Reactome" id="R-MMU-1234176">
    <property type="pathway name" value="Oxygen-dependent proline hydroxylation of Hypoxia-inducible Factor Alpha"/>
</dbReference>
<dbReference type="Reactome" id="R-MMU-1253288">
    <property type="pathway name" value="Downregulation of ERBB4 signaling"/>
</dbReference>
<dbReference type="Reactome" id="R-MMU-1295596">
    <property type="pathway name" value="Spry regulation of FGF signaling"/>
</dbReference>
<dbReference type="Reactome" id="R-MMU-1358803">
    <property type="pathway name" value="Downregulation of ERBB2:ERBB3 signaling"/>
</dbReference>
<dbReference type="Reactome" id="R-MMU-168638">
    <property type="pathway name" value="NOD1/2 Signaling Pathway"/>
</dbReference>
<dbReference type="Reactome" id="R-MMU-174048">
    <property type="pathway name" value="APC/C:Cdc20 mediated degradation of Cyclin B"/>
</dbReference>
<dbReference type="Reactome" id="R-MMU-174084">
    <property type="pathway name" value="Autodegradation of Cdh1 by Cdh1:APC/C"/>
</dbReference>
<dbReference type="Reactome" id="R-MMU-174113">
    <property type="pathway name" value="SCF-beta-TrCP mediated degradation of Emi1"/>
</dbReference>
<dbReference type="Reactome" id="R-MMU-174154">
    <property type="pathway name" value="APC/C:Cdc20 mediated degradation of Securin"/>
</dbReference>
<dbReference type="Reactome" id="R-MMU-174178">
    <property type="pathway name" value="APC/C:Cdh1 mediated degradation of Cdc20 and other APC/C:Cdh1 targeted proteins in late mitosis/early G1"/>
</dbReference>
<dbReference type="Reactome" id="R-MMU-174184">
    <property type="pathway name" value="Cdc20:Phospho-APC/C mediated degradation of Cyclin A"/>
</dbReference>
<dbReference type="Reactome" id="R-MMU-179409">
    <property type="pathway name" value="APC-Cdc20 mediated degradation of Nek2A"/>
</dbReference>
<dbReference type="Reactome" id="R-MMU-182971">
    <property type="pathway name" value="EGFR downregulation"/>
</dbReference>
<dbReference type="Reactome" id="R-MMU-187577">
    <property type="pathway name" value="SCF(Skp2)-mediated degradation of p27/p21"/>
</dbReference>
<dbReference type="Reactome" id="R-MMU-195253">
    <property type="pathway name" value="Degradation of beta-catenin by the destruction complex"/>
</dbReference>
<dbReference type="Reactome" id="R-MMU-201681">
    <property type="pathway name" value="TCF dependent signaling in response to WNT"/>
</dbReference>
<dbReference type="Reactome" id="R-MMU-202424">
    <property type="pathway name" value="Downstream TCR signaling"/>
</dbReference>
<dbReference type="Reactome" id="R-MMU-205043">
    <property type="pathway name" value="NRIF signals cell death from the nucleus"/>
</dbReference>
<dbReference type="Reactome" id="R-MMU-209543">
    <property type="pathway name" value="p75NTR recruits signalling complexes"/>
</dbReference>
<dbReference type="Reactome" id="R-MMU-209560">
    <property type="pathway name" value="NF-kB is activated and signals survival"/>
</dbReference>
<dbReference type="Reactome" id="R-MMU-2122948">
    <property type="pathway name" value="Activated NOTCH1 Transmits Signal to the Nucleus"/>
</dbReference>
<dbReference type="Reactome" id="R-MMU-2173788">
    <property type="pathway name" value="Downregulation of TGF-beta receptor signaling"/>
</dbReference>
<dbReference type="Reactome" id="R-MMU-2173791">
    <property type="pathway name" value="TGF-beta receptor signaling in EMT (epithelial to mesenchymal transition)"/>
</dbReference>
<dbReference type="Reactome" id="R-MMU-2173795">
    <property type="pathway name" value="Downregulation of SMAD2/3:SMAD4 transcriptional activity"/>
</dbReference>
<dbReference type="Reactome" id="R-MMU-2173796">
    <property type="pathway name" value="SMAD2/SMAD3:SMAD4 heterotrimer regulates transcription"/>
</dbReference>
<dbReference type="Reactome" id="R-MMU-2467813">
    <property type="pathway name" value="Separation of Sister Chromatids"/>
</dbReference>
<dbReference type="Reactome" id="R-MMU-2559580">
    <property type="pathway name" value="Oxidative Stress Induced Senescence"/>
</dbReference>
<dbReference type="Reactome" id="R-MMU-2559582">
    <property type="pathway name" value="Senescence-Associated Secretory Phenotype (SASP)"/>
</dbReference>
<dbReference type="Reactome" id="R-MMU-2559585">
    <property type="pathway name" value="Oncogene Induced Senescence"/>
</dbReference>
<dbReference type="Reactome" id="R-MMU-2565942">
    <property type="pathway name" value="Regulation of PLK1 Activity at G2/M Transition"/>
</dbReference>
<dbReference type="Reactome" id="R-MMU-2672351">
    <property type="pathway name" value="Stimuli-sensing channels"/>
</dbReference>
<dbReference type="Reactome" id="R-MMU-2871837">
    <property type="pathway name" value="FCERI mediated NF-kB activation"/>
</dbReference>
<dbReference type="Reactome" id="R-MMU-3134975">
    <property type="pathway name" value="Regulation of innate immune responses to cytosolic DNA"/>
</dbReference>
<dbReference type="Reactome" id="R-MMU-349425">
    <property type="pathway name" value="Autodegradation of the E3 ubiquitin ligase COP1"/>
</dbReference>
<dbReference type="Reactome" id="R-MMU-3769402">
    <property type="pathway name" value="Deactivation of the beta-catenin transactivating complex"/>
</dbReference>
<dbReference type="Reactome" id="R-MMU-382556">
    <property type="pathway name" value="ABC-family proteins mediated transport"/>
</dbReference>
<dbReference type="Reactome" id="R-MMU-445989">
    <property type="pathway name" value="TAK1-dependent IKK and NF-kappa-B activation"/>
</dbReference>
<dbReference type="Reactome" id="R-MMU-450302">
    <property type="pathway name" value="activated TAK1 mediates p38 MAPK activation"/>
</dbReference>
<dbReference type="Reactome" id="R-MMU-450321">
    <property type="pathway name" value="JNK (c-Jun kinases) phosphorylation and activation mediated by activated human TAK1"/>
</dbReference>
<dbReference type="Reactome" id="R-MMU-450408">
    <property type="pathway name" value="AUF1 (hnRNP D0) binds and destabilizes mRNA"/>
</dbReference>
<dbReference type="Reactome" id="R-MMU-4608870">
    <property type="pathway name" value="Asymmetric localization of PCP proteins"/>
</dbReference>
<dbReference type="Reactome" id="R-MMU-4641257">
    <property type="pathway name" value="Degradation of AXIN"/>
</dbReference>
<dbReference type="Reactome" id="R-MMU-4641258">
    <property type="pathway name" value="Degradation of DVL"/>
</dbReference>
<dbReference type="Reactome" id="R-MMU-4641263">
    <property type="pathway name" value="Regulation of FZD by ubiquitination"/>
</dbReference>
<dbReference type="Reactome" id="R-MMU-5205685">
    <property type="pathway name" value="PINK1-PRKN Mediated Mitophagy"/>
</dbReference>
<dbReference type="Reactome" id="R-MMU-532668">
    <property type="pathway name" value="N-glycan trimming in the ER and Calnexin/Calreticulin cycle"/>
</dbReference>
<dbReference type="Reactome" id="R-MMU-5357905">
    <property type="pathway name" value="Regulation of TNFR1 signaling"/>
</dbReference>
<dbReference type="Reactome" id="R-MMU-5357956">
    <property type="pathway name" value="TNFR1-induced NF-kappa-B signaling pathway"/>
</dbReference>
<dbReference type="Reactome" id="R-MMU-5358346">
    <property type="pathway name" value="Hedgehog ligand biogenesis"/>
</dbReference>
<dbReference type="Reactome" id="R-MMU-5607761">
    <property type="pathway name" value="Dectin-1 mediated noncanonical NF-kB signaling"/>
</dbReference>
<dbReference type="Reactome" id="R-MMU-5607764">
    <property type="pathway name" value="CLEC7A (Dectin-1) signaling"/>
</dbReference>
<dbReference type="Reactome" id="R-MMU-5610780">
    <property type="pathway name" value="Degradation of GLI1 by the proteasome"/>
</dbReference>
<dbReference type="Reactome" id="R-MMU-5610785">
    <property type="pathway name" value="GLI3 is processed to GLI3R by the proteasome"/>
</dbReference>
<dbReference type="Reactome" id="R-MMU-5632684">
    <property type="pathway name" value="Hedgehog 'on' state"/>
</dbReference>
<dbReference type="Reactome" id="R-MMU-5654726">
    <property type="pathway name" value="Negative regulation of FGFR1 signaling"/>
</dbReference>
<dbReference type="Reactome" id="R-MMU-5654727">
    <property type="pathway name" value="Negative regulation of FGFR2 signaling"/>
</dbReference>
<dbReference type="Reactome" id="R-MMU-5654732">
    <property type="pathway name" value="Negative regulation of FGFR3 signaling"/>
</dbReference>
<dbReference type="Reactome" id="R-MMU-5654733">
    <property type="pathway name" value="Negative regulation of FGFR4 signaling"/>
</dbReference>
<dbReference type="Reactome" id="R-MMU-5655862">
    <property type="pathway name" value="Translesion synthesis by POLK"/>
</dbReference>
<dbReference type="Reactome" id="R-MMU-5656121">
    <property type="pathway name" value="Translesion synthesis by POLI"/>
</dbReference>
<dbReference type="Reactome" id="R-MMU-5656169">
    <property type="pathway name" value="Termination of translesion DNA synthesis"/>
</dbReference>
<dbReference type="Reactome" id="R-MMU-5658442">
    <property type="pathway name" value="Regulation of RAS by GAPs"/>
</dbReference>
<dbReference type="Reactome" id="R-MMU-5668541">
    <property type="pathway name" value="TNFR2 non-canonical NF-kB pathway"/>
</dbReference>
<dbReference type="Reactome" id="R-MMU-5675221">
    <property type="pathway name" value="Negative regulation of MAPK pathway"/>
</dbReference>
<dbReference type="Reactome" id="R-MMU-5675482">
    <property type="pathway name" value="Regulation of necroptotic cell death"/>
</dbReference>
<dbReference type="Reactome" id="R-MMU-5676590">
    <property type="pathway name" value="NIK--&gt;noncanonical NF-kB signaling"/>
</dbReference>
<dbReference type="Reactome" id="R-MMU-5684264">
    <property type="pathway name" value="MAP3K8 (TPL2)-dependent MAPK1/3 activation"/>
</dbReference>
<dbReference type="Reactome" id="R-MMU-5685942">
    <property type="pathway name" value="HDR through Homologous Recombination (HRR)"/>
</dbReference>
<dbReference type="Reactome" id="R-MMU-5687128">
    <property type="pathway name" value="MAPK6/MAPK4 signaling"/>
</dbReference>
<dbReference type="Reactome" id="R-MMU-5689603">
    <property type="pathway name" value="UCH proteinases"/>
</dbReference>
<dbReference type="Reactome" id="R-MMU-5689877">
    <property type="pathway name" value="Josephin domain DUBs"/>
</dbReference>
<dbReference type="Reactome" id="R-MMU-5689880">
    <property type="pathway name" value="Ub-specific processing proteases"/>
</dbReference>
<dbReference type="Reactome" id="R-MMU-5689896">
    <property type="pathway name" value="Ovarian tumor domain proteases"/>
</dbReference>
<dbReference type="Reactome" id="R-MMU-5689901">
    <property type="pathway name" value="Metalloprotease DUBs"/>
</dbReference>
<dbReference type="Reactome" id="R-MMU-5693565">
    <property type="pathway name" value="Recruitment and ATM-mediated phosphorylation of repair and signaling proteins at DNA double strand breaks"/>
</dbReference>
<dbReference type="Reactome" id="R-MMU-5693607">
    <property type="pathway name" value="Processing of DNA double-strand break ends"/>
</dbReference>
<dbReference type="Reactome" id="R-MMU-5696394">
    <property type="pathway name" value="DNA Damage Recognition in GG-NER"/>
</dbReference>
<dbReference type="Reactome" id="R-MMU-5696395">
    <property type="pathway name" value="Formation of Incision Complex in GG-NER"/>
</dbReference>
<dbReference type="Reactome" id="R-MMU-5696397">
    <property type="pathway name" value="Gap-filling DNA repair synthesis and ligation in GG-NER"/>
</dbReference>
<dbReference type="Reactome" id="R-MMU-5696400">
    <property type="pathway name" value="Dual Incision in GG-NER"/>
</dbReference>
<dbReference type="Reactome" id="R-MMU-6781823">
    <property type="pathway name" value="Formation of TC-NER Pre-Incision Complex"/>
</dbReference>
<dbReference type="Reactome" id="R-MMU-6782135">
    <property type="pathway name" value="Dual incision in TC-NER"/>
</dbReference>
<dbReference type="Reactome" id="R-MMU-6782210">
    <property type="pathway name" value="Gap-filling DNA repair synthesis and ligation in TC-NER"/>
</dbReference>
<dbReference type="Reactome" id="R-MMU-6783310">
    <property type="pathway name" value="Fanconi Anemia Pathway"/>
</dbReference>
<dbReference type="Reactome" id="R-MMU-6804756">
    <property type="pathway name" value="Regulation of TP53 Activity through Phosphorylation"/>
</dbReference>
<dbReference type="Reactome" id="R-MMU-6804757">
    <property type="pathway name" value="Regulation of TP53 Degradation"/>
</dbReference>
<dbReference type="Reactome" id="R-MMU-6804760">
    <property type="pathway name" value="Regulation of TP53 Activity through Methylation"/>
</dbReference>
<dbReference type="Reactome" id="R-MMU-6807004">
    <property type="pathway name" value="Negative regulation of MET activity"/>
</dbReference>
<dbReference type="Reactome" id="R-MMU-68867">
    <property type="pathway name" value="Assembly of the pre-replicative complex"/>
</dbReference>
<dbReference type="Reactome" id="R-MMU-68949">
    <property type="pathway name" value="Orc1 removal from chromatin"/>
</dbReference>
<dbReference type="Reactome" id="R-MMU-69017">
    <property type="pathway name" value="CDK-mediated phosphorylation and removal of Cdc6"/>
</dbReference>
<dbReference type="Reactome" id="R-MMU-69231">
    <property type="pathway name" value="Cyclin D associated events in G1"/>
</dbReference>
<dbReference type="Reactome" id="R-MMU-69481">
    <property type="pathway name" value="G2/M Checkpoints"/>
</dbReference>
<dbReference type="Reactome" id="R-MMU-69541">
    <property type="pathway name" value="Stabilization of p53"/>
</dbReference>
<dbReference type="Reactome" id="R-MMU-69601">
    <property type="pathway name" value="Ubiquitin Mediated Degradation of Phosphorylated Cdc25A"/>
</dbReference>
<dbReference type="Reactome" id="R-MMU-75815">
    <property type="pathway name" value="Ubiquitin-dependent degradation of Cyclin D"/>
</dbReference>
<dbReference type="Reactome" id="R-MMU-8849469">
    <property type="pathway name" value="PTK6 Regulates RTKs and Their Effectors AKT1 and DOK1"/>
</dbReference>
<dbReference type="Reactome" id="R-MMU-8852276">
    <property type="pathway name" value="The role of GTSE1 in G2/M progression after G2 checkpoint"/>
</dbReference>
<dbReference type="Reactome" id="R-MMU-8854050">
    <property type="pathway name" value="FBXL7 down-regulates AURKA during mitotic entry and in early mitosis"/>
</dbReference>
<dbReference type="Reactome" id="R-MMU-8856825">
    <property type="pathway name" value="Cargo recognition for clathrin-mediated endocytosis"/>
</dbReference>
<dbReference type="Reactome" id="R-MMU-8856828">
    <property type="pathway name" value="Clathrin-mediated endocytosis"/>
</dbReference>
<dbReference type="Reactome" id="R-MMU-8863795">
    <property type="pathway name" value="Downregulation of ERBB2 signaling"/>
</dbReference>
<dbReference type="Reactome" id="R-MMU-8866427">
    <property type="pathway name" value="VLDLR internalisation and degradation"/>
</dbReference>
<dbReference type="Reactome" id="R-MMU-8866652">
    <property type="pathway name" value="Synthesis of active ubiquitin: roles of E1 and E2 enzymes"/>
</dbReference>
<dbReference type="Reactome" id="R-MMU-8866654">
    <property type="pathway name" value="E3 ubiquitin ligases ubiquitinate target proteins"/>
</dbReference>
<dbReference type="Reactome" id="R-MMU-8939236">
    <property type="pathway name" value="RUNX1 regulates transcription of genes involved in differentiation of HSCs"/>
</dbReference>
<dbReference type="Reactome" id="R-MMU-8939902">
    <property type="pathway name" value="Regulation of RUNX2 expression and activity"/>
</dbReference>
<dbReference type="Reactome" id="R-MMU-8941858">
    <property type="pathway name" value="Regulation of RUNX3 expression and activity"/>
</dbReference>
<dbReference type="Reactome" id="R-MMU-8948747">
    <property type="pathway name" value="Regulation of PTEN localization"/>
</dbReference>
<dbReference type="Reactome" id="R-MMU-8948751">
    <property type="pathway name" value="Regulation of PTEN stability and activity"/>
</dbReference>
<dbReference type="Reactome" id="R-MMU-8951664">
    <property type="pathway name" value="Neddylation"/>
</dbReference>
<dbReference type="Reactome" id="R-MMU-901032">
    <property type="pathway name" value="ER Quality Control Compartment (ERQC)"/>
</dbReference>
<dbReference type="Reactome" id="R-MMU-9010553">
    <property type="pathway name" value="Regulation of expression of SLITs and ROBOs"/>
</dbReference>
<dbReference type="Reactome" id="R-MMU-9013507">
    <property type="pathway name" value="NOTCH3 Activation and Transmission of Signal to the Nucleus"/>
</dbReference>
<dbReference type="Reactome" id="R-MMU-9020702">
    <property type="pathway name" value="Interleukin-1 signaling"/>
</dbReference>
<dbReference type="Reactome" id="R-MMU-9033241">
    <property type="pathway name" value="Peroxisomal protein import"/>
</dbReference>
<dbReference type="Reactome" id="R-MMU-909733">
    <property type="pathway name" value="Interferon alpha/beta signaling"/>
</dbReference>
<dbReference type="Reactome" id="R-MMU-912631">
    <property type="pathway name" value="Regulation of signaling by CBL"/>
</dbReference>
<dbReference type="Reactome" id="R-MMU-917729">
    <property type="pathway name" value="Endosomal Sorting Complex Required For Transport (ESCRT)"/>
</dbReference>
<dbReference type="Reactome" id="R-MMU-917937">
    <property type="pathway name" value="Iron uptake and transport"/>
</dbReference>
<dbReference type="Reactome" id="R-MMU-936440">
    <property type="pathway name" value="Negative regulators of DDX58/IFIH1 signaling"/>
</dbReference>
<dbReference type="Reactome" id="R-MMU-936964">
    <property type="pathway name" value="Activation of IRF3, IRF7 mediated by TBK1, IKKEpsilon (IKBKE)"/>
</dbReference>
<dbReference type="Reactome" id="R-MMU-937039">
    <property type="pathway name" value="IRAK1 recruits IKK complex"/>
</dbReference>
<dbReference type="Reactome" id="R-MMU-937041">
    <property type="pathway name" value="IKK complex recruitment mediated by RIP1"/>
</dbReference>
<dbReference type="Reactome" id="R-MMU-937042">
    <property type="pathway name" value="IRAK2 mediated activation of TAK1 complex"/>
</dbReference>
<dbReference type="Reactome" id="R-MMU-937072">
    <property type="pathway name" value="TRAF6-mediated induction of TAK1 complex within TLR4 complex"/>
</dbReference>
<dbReference type="Reactome" id="R-MMU-9645460">
    <property type="pathway name" value="Alpha-protein kinase 1 signaling pathway"/>
</dbReference>
<dbReference type="Reactome" id="R-MMU-9646399">
    <property type="pathway name" value="Aggrephagy"/>
</dbReference>
<dbReference type="Reactome" id="R-MMU-9648002">
    <property type="pathway name" value="RAS processing"/>
</dbReference>
<dbReference type="Reactome" id="R-MMU-9664873">
    <property type="pathway name" value="Pexophagy"/>
</dbReference>
<dbReference type="Reactome" id="R-MMU-9705462">
    <property type="pathway name" value="Inactivation of CSF3 (G-CSF) signaling"/>
</dbReference>
<dbReference type="Reactome" id="R-MMU-9706369">
    <property type="pathway name" value="Negative regulation of FLT3"/>
</dbReference>
<dbReference type="Reactome" id="R-MMU-9708530">
    <property type="pathway name" value="Regulation of BACH1 activity"/>
</dbReference>
<dbReference type="Reactome" id="R-MMU-975144">
    <property type="pathway name" value="IRAK1 recruits IKK complex upon TLR7/8 or 9 stimulation"/>
</dbReference>
<dbReference type="Reactome" id="R-MMU-975163">
    <property type="pathway name" value="IRAK2 mediated activation of TAK1 complex upon TLR7/8 or 9 stimulation"/>
</dbReference>
<dbReference type="Reactome" id="R-MMU-9755511">
    <property type="pathway name" value="KEAP1-NFE2L2 pathway"/>
</dbReference>
<dbReference type="Reactome" id="R-MMU-9758274">
    <property type="pathway name" value="Regulation of NF-kappa B signaling"/>
</dbReference>
<dbReference type="Reactome" id="R-MMU-9762114">
    <property type="pathway name" value="GSK3B and BTRC:CUL1-mediated-degradation of NFE2L2"/>
</dbReference>
<dbReference type="Reactome" id="R-MMU-9824878">
    <property type="pathway name" value="Regulation of TBK1, IKKEpsilon (IKBKE)-mediated activation of IRF3, IRF7"/>
</dbReference>
<dbReference type="Reactome" id="R-MMU-983168">
    <property type="pathway name" value="Antigen processing: Ubiquitination &amp; Proteasome degradation"/>
</dbReference>
<dbReference type="Reactome" id="R-MMU-9861718">
    <property type="pathway name" value="Regulation of pyruvate metabolism"/>
</dbReference>
<dbReference type="BioGRID-ORCS" id="22187">
    <property type="hits" value="8 hits in 41 CRISPR screens"/>
</dbReference>
<dbReference type="ChiTaRS" id="Ubb">
    <property type="organism name" value="mouse"/>
</dbReference>
<dbReference type="PRO" id="PR:P0CG49"/>
<dbReference type="Proteomes" id="UP000000589">
    <property type="component" value="Chromosome 11"/>
</dbReference>
<dbReference type="RNAct" id="P0CG49">
    <property type="molecule type" value="protein"/>
</dbReference>
<dbReference type="Bgee" id="ENSMUSG00000019505">
    <property type="expression patterns" value="Expressed in neural tube and 95 other cell types or tissues"/>
</dbReference>
<dbReference type="ExpressionAtlas" id="P0CG49">
    <property type="expression patterns" value="baseline and differential"/>
</dbReference>
<dbReference type="GO" id="GO:0005829">
    <property type="term" value="C:cytosol"/>
    <property type="evidence" value="ECO:0000304"/>
    <property type="project" value="Reactome"/>
</dbReference>
<dbReference type="GO" id="GO:0005741">
    <property type="term" value="C:mitochondrial outer membrane"/>
    <property type="evidence" value="ECO:0007669"/>
    <property type="project" value="UniProtKB-SubCell"/>
</dbReference>
<dbReference type="GO" id="GO:0005739">
    <property type="term" value="C:mitochondrion"/>
    <property type="evidence" value="ECO:0000266"/>
    <property type="project" value="MGI"/>
</dbReference>
<dbReference type="GO" id="GO:0043209">
    <property type="term" value="C:myelin sheath"/>
    <property type="evidence" value="ECO:0007005"/>
    <property type="project" value="UniProtKB"/>
</dbReference>
<dbReference type="GO" id="GO:0043005">
    <property type="term" value="C:neuron projection"/>
    <property type="evidence" value="ECO:0000266"/>
    <property type="project" value="MGI"/>
</dbReference>
<dbReference type="GO" id="GO:0043025">
    <property type="term" value="C:neuronal cell body"/>
    <property type="evidence" value="ECO:0000266"/>
    <property type="project" value="MGI"/>
</dbReference>
<dbReference type="GO" id="GO:0005654">
    <property type="term" value="C:nucleoplasm"/>
    <property type="evidence" value="ECO:0000304"/>
    <property type="project" value="Reactome"/>
</dbReference>
<dbReference type="GO" id="GO:0060612">
    <property type="term" value="P:adipose tissue development"/>
    <property type="evidence" value="ECO:0000315"/>
    <property type="project" value="MGI"/>
</dbReference>
<dbReference type="GO" id="GO:0097009">
    <property type="term" value="P:energy homeostasis"/>
    <property type="evidence" value="ECO:0000315"/>
    <property type="project" value="MGI"/>
</dbReference>
<dbReference type="GO" id="GO:0060613">
    <property type="term" value="P:fat pad development"/>
    <property type="evidence" value="ECO:0000315"/>
    <property type="project" value="MGI"/>
</dbReference>
<dbReference type="GO" id="GO:0008585">
    <property type="term" value="P:female gonad development"/>
    <property type="evidence" value="ECO:0000315"/>
    <property type="project" value="MGI"/>
</dbReference>
<dbReference type="GO" id="GO:0007144">
    <property type="term" value="P:female meiosis I"/>
    <property type="evidence" value="ECO:0000315"/>
    <property type="project" value="MGI"/>
</dbReference>
<dbReference type="GO" id="GO:0021888">
    <property type="term" value="P:hypothalamus gonadotrophin-releasing hormone neuron development"/>
    <property type="evidence" value="ECO:0000315"/>
    <property type="project" value="MGI"/>
</dbReference>
<dbReference type="GO" id="GO:0008584">
    <property type="term" value="P:male gonad development"/>
    <property type="evidence" value="ECO:0000315"/>
    <property type="project" value="MGI"/>
</dbReference>
<dbReference type="GO" id="GO:0007141">
    <property type="term" value="P:male meiosis I"/>
    <property type="evidence" value="ECO:0000315"/>
    <property type="project" value="MGI"/>
</dbReference>
<dbReference type="GO" id="GO:0047497">
    <property type="term" value="P:mitochondrion transport along microtubule"/>
    <property type="evidence" value="ECO:0000266"/>
    <property type="project" value="MGI"/>
</dbReference>
<dbReference type="GO" id="GO:0048812">
    <property type="term" value="P:neuron projection morphogenesis"/>
    <property type="evidence" value="ECO:0000266"/>
    <property type="project" value="MGI"/>
</dbReference>
<dbReference type="GO" id="GO:1902255">
    <property type="term" value="P:positive regulation of intrinsic apoptotic signaling pathway by p53 class mediator"/>
    <property type="evidence" value="ECO:0000266"/>
    <property type="project" value="MGI"/>
</dbReference>
<dbReference type="GO" id="GO:1902527">
    <property type="term" value="P:positive regulation of protein monoubiquitination"/>
    <property type="evidence" value="ECO:0007669"/>
    <property type="project" value="Ensembl"/>
</dbReference>
<dbReference type="GO" id="GO:0051881">
    <property type="term" value="P:regulation of mitochondrial membrane potential"/>
    <property type="evidence" value="ECO:0000266"/>
    <property type="project" value="MGI"/>
</dbReference>
<dbReference type="GO" id="GO:0043523">
    <property type="term" value="P:regulation of neuron apoptotic process"/>
    <property type="evidence" value="ECO:0000266"/>
    <property type="project" value="MGI"/>
</dbReference>
<dbReference type="GO" id="GO:0061136">
    <property type="term" value="P:regulation of proteasomal protein catabolic process"/>
    <property type="evidence" value="ECO:0000266"/>
    <property type="project" value="MGI"/>
</dbReference>
<dbReference type="GO" id="GO:0072520">
    <property type="term" value="P:seminiferous tubule development"/>
    <property type="evidence" value="ECO:0000315"/>
    <property type="project" value="MGI"/>
</dbReference>
<dbReference type="CDD" id="cd01803">
    <property type="entry name" value="Ubl_ubiquitin"/>
    <property type="match status" value="4"/>
</dbReference>
<dbReference type="FunFam" id="3.10.20.90:FF:000158">
    <property type="entry name" value="Polyubiquitin 5"/>
    <property type="match status" value="4"/>
</dbReference>
<dbReference type="Gene3D" id="3.10.20.90">
    <property type="entry name" value="Phosphatidylinositol 3-kinase Catalytic Subunit, Chain A, domain 1"/>
    <property type="match status" value="4"/>
</dbReference>
<dbReference type="InterPro" id="IPR000626">
    <property type="entry name" value="Ubiquitin-like_dom"/>
</dbReference>
<dbReference type="InterPro" id="IPR029071">
    <property type="entry name" value="Ubiquitin-like_domsf"/>
</dbReference>
<dbReference type="InterPro" id="IPR019954">
    <property type="entry name" value="Ubiquitin_CS"/>
</dbReference>
<dbReference type="InterPro" id="IPR019956">
    <property type="entry name" value="Ubiquitin_dom"/>
</dbReference>
<dbReference type="InterPro" id="IPR050158">
    <property type="entry name" value="Ubiquitin_ubiquitin-like"/>
</dbReference>
<dbReference type="PANTHER" id="PTHR10666">
    <property type="entry name" value="UBIQUITIN"/>
    <property type="match status" value="1"/>
</dbReference>
<dbReference type="Pfam" id="PF00240">
    <property type="entry name" value="ubiquitin"/>
    <property type="match status" value="4"/>
</dbReference>
<dbReference type="PRINTS" id="PR00348">
    <property type="entry name" value="UBIQUITIN"/>
</dbReference>
<dbReference type="SMART" id="SM00213">
    <property type="entry name" value="UBQ"/>
    <property type="match status" value="4"/>
</dbReference>
<dbReference type="SUPFAM" id="SSF54236">
    <property type="entry name" value="Ubiquitin-like"/>
    <property type="match status" value="4"/>
</dbReference>
<dbReference type="PROSITE" id="PS00299">
    <property type="entry name" value="UBIQUITIN_1"/>
    <property type="match status" value="4"/>
</dbReference>
<dbReference type="PROSITE" id="PS50053">
    <property type="entry name" value="UBIQUITIN_2"/>
    <property type="match status" value="4"/>
</dbReference>
<name>UBB_MOUSE</name>
<keyword id="KW-0013">ADP-ribosylation</keyword>
<keyword id="KW-0963">Cytoplasm</keyword>
<keyword id="KW-1017">Isopeptide bond</keyword>
<keyword id="KW-0472">Membrane</keyword>
<keyword id="KW-0496">Mitochondrion</keyword>
<keyword id="KW-1000">Mitochondrion outer membrane</keyword>
<keyword id="KW-0539">Nucleus</keyword>
<keyword id="KW-0597">Phosphoprotein</keyword>
<keyword id="KW-1185">Reference proteome</keyword>
<keyword id="KW-0677">Repeat</keyword>
<keyword id="KW-0832">Ubl conjugation</keyword>
<feature type="chain" id="PRO_0000114801" description="Ubiquitin">
    <location>
        <begin position="1"/>
        <end position="76"/>
    </location>
</feature>
<feature type="chain" id="PRO_0000396188" description="Ubiquitin">
    <location>
        <begin position="77"/>
        <end position="152"/>
    </location>
</feature>
<feature type="chain" id="PRO_0000396189" description="Ubiquitin">
    <location>
        <begin position="153"/>
        <end position="228"/>
    </location>
</feature>
<feature type="chain" id="PRO_0000396190" description="Ubiquitin">
    <location>
        <begin position="229"/>
        <end position="304"/>
    </location>
</feature>
<feature type="propeptide" id="PRO_0000396191">
    <location>
        <position position="305"/>
    </location>
</feature>
<feature type="domain" description="Ubiquitin-like 1" evidence="4">
    <location>
        <begin position="1"/>
        <end position="76"/>
    </location>
</feature>
<feature type="domain" description="Ubiquitin-like 2" evidence="4">
    <location>
        <begin position="77"/>
        <end position="152"/>
    </location>
</feature>
<feature type="domain" description="Ubiquitin-like 3" evidence="4">
    <location>
        <begin position="153"/>
        <end position="228"/>
    </location>
</feature>
<feature type="domain" description="Ubiquitin-like 4" evidence="4">
    <location>
        <begin position="229"/>
        <end position="304"/>
    </location>
</feature>
<feature type="site" description="Interacts with activating enzyme">
    <location>
        <position position="54"/>
    </location>
</feature>
<feature type="site" description="Essential for function">
    <location>
        <position position="68"/>
    </location>
</feature>
<feature type="site" description="Interacts with activating enzyme">
    <location>
        <position position="72"/>
    </location>
</feature>
<feature type="modified residue" description="Phosphoserine; by PINK1" evidence="2">
    <location>
        <position position="65"/>
    </location>
</feature>
<feature type="modified residue" description="ADP-ribosylglycine" evidence="2">
    <location>
        <position position="76"/>
    </location>
</feature>
<feature type="modified residue" description="Phosphoserine" evidence="2">
    <location>
        <position position="141"/>
    </location>
</feature>
<feature type="cross-link" description="Glycyl lysine isopeptide (Lys-Gly) (interchain with G-Cter in ubiquitin)" evidence="3">
    <location>
        <position position="48"/>
    </location>
</feature>
<feature type="cross-link" description="Glycyl lysine isopeptide (Gly-Lys) (interchain with K-? in acceptor proteins)" evidence="4">
    <location>
        <position position="76"/>
    </location>
</feature>
<feature type="cross-link" description="Glycyl lysine isopeptide (Lys-Gly) (interchain with G-Cter in ubiquitin)" evidence="2">
    <location>
        <position position="82"/>
    </location>
</feature>
<feature type="cross-link" description="Glycyl lysine isopeptide (Lys-Gly) (interchain with G-Cter in ubiquitin)" evidence="2">
    <location>
        <position position="87"/>
    </location>
</feature>
<feature type="cross-link" description="Glycyl lysine isopeptide (Lys-Gly) (interchain with G-Cter in ubiquitin)" evidence="2">
    <location>
        <position position="103"/>
    </location>
</feature>
<feature type="cross-link" description="Glycyl lysine isopeptide (Lys-Gly) (interchain with G-Cter in ubiquitin)" evidence="2">
    <location>
        <position position="105"/>
    </location>
</feature>
<feature type="cross-link" description="Glycyl lysine isopeptide (Lys-Gly) (interchain with G-Cter in ubiquitin)" evidence="2">
    <location>
        <position position="124"/>
    </location>
</feature>
<feature type="cross-link" description="Glycyl lysine isopeptide (Lys-Gly) (interchain with G-Cter in ubiquitin)" evidence="2">
    <location>
        <position position="139"/>
    </location>
</feature>
<feature type="sequence conflict" description="In Ref. 2; BAB29028." evidence="6" ref="2">
    <original>Q</original>
    <variation>R</variation>
    <location>
        <position position="31"/>
    </location>
</feature>
<feature type="sequence conflict" description="In Ref. 2; BAB29028." evidence="6" ref="2">
    <original>R</original>
    <variation>S</variation>
    <location>
        <position position="54"/>
    </location>
</feature>
<feature type="sequence conflict" description="In Ref. 2; BAB29028." evidence="6" ref="2">
    <original>I</original>
    <variation>N</variation>
    <location>
        <position position="61"/>
    </location>
</feature>
<feature type="sequence conflict" description="In Ref. 2; BAB29028." evidence="6" ref="2">
    <original>E</original>
    <variation>G</variation>
    <location>
        <position position="92"/>
    </location>
</feature>
<feature type="sequence conflict" description="In Ref. 3; AAH19850." evidence="6" ref="3">
    <original>Q</original>
    <variation>H</variation>
    <location>
        <position position="117"/>
    </location>
</feature>
<feature type="sequence conflict" description="In Ref. 2; BAB28242." evidence="6" ref="2">
    <original>L</original>
    <variation>F</variation>
    <location>
        <position position="147"/>
    </location>
</feature>
<organism>
    <name type="scientific">Mus musculus</name>
    <name type="common">Mouse</name>
    <dbReference type="NCBI Taxonomy" id="10090"/>
    <lineage>
        <taxon>Eukaryota</taxon>
        <taxon>Metazoa</taxon>
        <taxon>Chordata</taxon>
        <taxon>Craniata</taxon>
        <taxon>Vertebrata</taxon>
        <taxon>Euteleostomi</taxon>
        <taxon>Mammalia</taxon>
        <taxon>Eutheria</taxon>
        <taxon>Euarchontoglires</taxon>
        <taxon>Glires</taxon>
        <taxon>Rodentia</taxon>
        <taxon>Myomorpha</taxon>
        <taxon>Muroidea</taxon>
        <taxon>Muridae</taxon>
        <taxon>Murinae</taxon>
        <taxon>Mus</taxon>
        <taxon>Mus</taxon>
    </lineage>
</organism>
<proteinExistence type="evidence at transcript level"/>